<protein>
    <recommendedName>
        <fullName evidence="1">4-hydroxythreonine-4-phosphate dehydrogenase</fullName>
        <ecNumber evidence="1">1.1.1.262</ecNumber>
    </recommendedName>
    <alternativeName>
        <fullName evidence="1">4-(phosphohydroxy)-L-threonine dehydrogenase</fullName>
    </alternativeName>
</protein>
<feature type="chain" id="PRO_1000211914" description="4-hydroxythreonine-4-phosphate dehydrogenase">
    <location>
        <begin position="1"/>
        <end position="329"/>
    </location>
</feature>
<feature type="binding site" evidence="1">
    <location>
        <position position="136"/>
    </location>
    <ligand>
        <name>substrate</name>
    </ligand>
</feature>
<feature type="binding site" evidence="1">
    <location>
        <position position="137"/>
    </location>
    <ligand>
        <name>substrate</name>
    </ligand>
</feature>
<feature type="binding site" evidence="1">
    <location>
        <position position="166"/>
    </location>
    <ligand>
        <name>a divalent metal cation</name>
        <dbReference type="ChEBI" id="CHEBI:60240"/>
        <note>ligand shared between dimeric partners</note>
    </ligand>
</feature>
<feature type="binding site" evidence="1">
    <location>
        <position position="211"/>
    </location>
    <ligand>
        <name>a divalent metal cation</name>
        <dbReference type="ChEBI" id="CHEBI:60240"/>
        <note>ligand shared between dimeric partners</note>
    </ligand>
</feature>
<feature type="binding site" evidence="1">
    <location>
        <position position="266"/>
    </location>
    <ligand>
        <name>a divalent metal cation</name>
        <dbReference type="ChEBI" id="CHEBI:60240"/>
        <note>ligand shared between dimeric partners</note>
    </ligand>
</feature>
<feature type="binding site" evidence="1">
    <location>
        <position position="274"/>
    </location>
    <ligand>
        <name>substrate</name>
    </ligand>
</feature>
<feature type="binding site" evidence="1">
    <location>
        <position position="283"/>
    </location>
    <ligand>
        <name>substrate</name>
    </ligand>
</feature>
<feature type="binding site" evidence="1">
    <location>
        <position position="292"/>
    </location>
    <ligand>
        <name>substrate</name>
    </ligand>
</feature>
<comment type="function">
    <text evidence="1">Catalyzes the NAD(P)-dependent oxidation of 4-(phosphooxy)-L-threonine (HTP) into 2-amino-3-oxo-4-(phosphooxy)butyric acid which spontaneously decarboxylates to form 3-amino-2-oxopropyl phosphate (AHAP).</text>
</comment>
<comment type="catalytic activity">
    <reaction evidence="1">
        <text>4-(phosphooxy)-L-threonine + NAD(+) = 3-amino-2-oxopropyl phosphate + CO2 + NADH</text>
        <dbReference type="Rhea" id="RHEA:32275"/>
        <dbReference type="ChEBI" id="CHEBI:16526"/>
        <dbReference type="ChEBI" id="CHEBI:57279"/>
        <dbReference type="ChEBI" id="CHEBI:57540"/>
        <dbReference type="ChEBI" id="CHEBI:57945"/>
        <dbReference type="ChEBI" id="CHEBI:58452"/>
        <dbReference type="EC" id="1.1.1.262"/>
    </reaction>
</comment>
<comment type="cofactor">
    <cofactor evidence="1">
        <name>Zn(2+)</name>
        <dbReference type="ChEBI" id="CHEBI:29105"/>
    </cofactor>
    <cofactor evidence="1">
        <name>Mg(2+)</name>
        <dbReference type="ChEBI" id="CHEBI:18420"/>
    </cofactor>
    <cofactor evidence="1">
        <name>Co(2+)</name>
        <dbReference type="ChEBI" id="CHEBI:48828"/>
    </cofactor>
    <text evidence="1">Binds 1 divalent metal cation per subunit. Can use ions such as Zn(2+), Mg(2+) or Co(2+).</text>
</comment>
<comment type="pathway">
    <text evidence="1">Cofactor biosynthesis; pyridoxine 5'-phosphate biosynthesis; pyridoxine 5'-phosphate from D-erythrose 4-phosphate: step 4/5.</text>
</comment>
<comment type="subunit">
    <text evidence="1">Homodimer.</text>
</comment>
<comment type="subcellular location">
    <subcellularLocation>
        <location evidence="1">Cytoplasm</location>
    </subcellularLocation>
</comment>
<comment type="miscellaneous">
    <text evidence="1">The active site is located at the dimer interface.</text>
</comment>
<comment type="similarity">
    <text evidence="1">Belongs to the PdxA family.</text>
</comment>
<dbReference type="EC" id="1.1.1.262" evidence="1"/>
<dbReference type="EMBL" id="CP001396">
    <property type="protein sequence ID" value="ACR61842.1"/>
    <property type="molecule type" value="Genomic_DNA"/>
</dbReference>
<dbReference type="RefSeq" id="WP_000241277.1">
    <property type="nucleotide sequence ID" value="NC_012759.1"/>
</dbReference>
<dbReference type="SMR" id="C4ZPX8"/>
<dbReference type="KEGG" id="ebw:BWG_0050"/>
<dbReference type="HOGENOM" id="CLU_040168_1_0_6"/>
<dbReference type="UniPathway" id="UPA00244">
    <property type="reaction ID" value="UER00312"/>
</dbReference>
<dbReference type="GO" id="GO:0005737">
    <property type="term" value="C:cytoplasm"/>
    <property type="evidence" value="ECO:0007669"/>
    <property type="project" value="UniProtKB-SubCell"/>
</dbReference>
<dbReference type="GO" id="GO:0050570">
    <property type="term" value="F:4-hydroxythreonine-4-phosphate dehydrogenase activity"/>
    <property type="evidence" value="ECO:0007669"/>
    <property type="project" value="UniProtKB-UniRule"/>
</dbReference>
<dbReference type="GO" id="GO:0050897">
    <property type="term" value="F:cobalt ion binding"/>
    <property type="evidence" value="ECO:0007669"/>
    <property type="project" value="UniProtKB-UniRule"/>
</dbReference>
<dbReference type="GO" id="GO:0000287">
    <property type="term" value="F:magnesium ion binding"/>
    <property type="evidence" value="ECO:0007669"/>
    <property type="project" value="UniProtKB-UniRule"/>
</dbReference>
<dbReference type="GO" id="GO:0051287">
    <property type="term" value="F:NAD binding"/>
    <property type="evidence" value="ECO:0007669"/>
    <property type="project" value="InterPro"/>
</dbReference>
<dbReference type="GO" id="GO:0008270">
    <property type="term" value="F:zinc ion binding"/>
    <property type="evidence" value="ECO:0007669"/>
    <property type="project" value="UniProtKB-UniRule"/>
</dbReference>
<dbReference type="GO" id="GO:0042823">
    <property type="term" value="P:pyridoxal phosphate biosynthetic process"/>
    <property type="evidence" value="ECO:0007669"/>
    <property type="project" value="UniProtKB-UniRule"/>
</dbReference>
<dbReference type="GO" id="GO:0008615">
    <property type="term" value="P:pyridoxine biosynthetic process"/>
    <property type="evidence" value="ECO:0007669"/>
    <property type="project" value="UniProtKB-UniRule"/>
</dbReference>
<dbReference type="FunFam" id="3.40.718.10:FF:000010">
    <property type="entry name" value="4-hydroxythreonine-4-phosphate dehydrogenase"/>
    <property type="match status" value="1"/>
</dbReference>
<dbReference type="Gene3D" id="3.40.718.10">
    <property type="entry name" value="Isopropylmalate Dehydrogenase"/>
    <property type="match status" value="1"/>
</dbReference>
<dbReference type="HAMAP" id="MF_00536">
    <property type="entry name" value="PdxA"/>
    <property type="match status" value="1"/>
</dbReference>
<dbReference type="InterPro" id="IPR037510">
    <property type="entry name" value="PdxA"/>
</dbReference>
<dbReference type="InterPro" id="IPR005255">
    <property type="entry name" value="PdxA_fam"/>
</dbReference>
<dbReference type="NCBIfam" id="TIGR00557">
    <property type="entry name" value="pdxA"/>
    <property type="match status" value="1"/>
</dbReference>
<dbReference type="PANTHER" id="PTHR30004">
    <property type="entry name" value="4-HYDROXYTHREONINE-4-PHOSPHATE DEHYDROGENASE"/>
    <property type="match status" value="1"/>
</dbReference>
<dbReference type="PANTHER" id="PTHR30004:SF5">
    <property type="entry name" value="4-HYDROXYTHREONINE-4-PHOSPHATE DEHYDROGENASE"/>
    <property type="match status" value="1"/>
</dbReference>
<dbReference type="Pfam" id="PF04166">
    <property type="entry name" value="PdxA"/>
    <property type="match status" value="1"/>
</dbReference>
<dbReference type="SUPFAM" id="SSF53659">
    <property type="entry name" value="Isocitrate/Isopropylmalate dehydrogenase-like"/>
    <property type="match status" value="1"/>
</dbReference>
<reference key="1">
    <citation type="journal article" date="2009" name="J. Bacteriol.">
        <title>Genomic sequencing reveals regulatory mutations and recombinational events in the widely used MC4100 lineage of Escherichia coli K-12.</title>
        <authorList>
            <person name="Ferenci T."/>
            <person name="Zhou Z."/>
            <person name="Betteridge T."/>
            <person name="Ren Y."/>
            <person name="Liu Y."/>
            <person name="Feng L."/>
            <person name="Reeves P.R."/>
            <person name="Wang L."/>
        </authorList>
    </citation>
    <scope>NUCLEOTIDE SEQUENCE [LARGE SCALE GENOMIC DNA]</scope>
    <source>
        <strain>K12 / MC4100 / BW2952</strain>
    </source>
</reference>
<evidence type="ECO:0000255" key="1">
    <source>
        <dbReference type="HAMAP-Rule" id="MF_00536"/>
    </source>
</evidence>
<organism>
    <name type="scientific">Escherichia coli (strain K12 / MC4100 / BW2952)</name>
    <dbReference type="NCBI Taxonomy" id="595496"/>
    <lineage>
        <taxon>Bacteria</taxon>
        <taxon>Pseudomonadati</taxon>
        <taxon>Pseudomonadota</taxon>
        <taxon>Gammaproteobacteria</taxon>
        <taxon>Enterobacterales</taxon>
        <taxon>Enterobacteriaceae</taxon>
        <taxon>Escherichia</taxon>
    </lineage>
</organism>
<keyword id="KW-0170">Cobalt</keyword>
<keyword id="KW-0963">Cytoplasm</keyword>
<keyword id="KW-0460">Magnesium</keyword>
<keyword id="KW-0479">Metal-binding</keyword>
<keyword id="KW-0520">NAD</keyword>
<keyword id="KW-0521">NADP</keyword>
<keyword id="KW-0560">Oxidoreductase</keyword>
<keyword id="KW-0664">Pyridoxine biosynthesis</keyword>
<keyword id="KW-0862">Zinc</keyword>
<name>PDXA_ECOBW</name>
<accession>C4ZPX8</accession>
<proteinExistence type="inferred from homology"/>
<sequence>MVKTQRVVITPGEPAGIGPDLVVQLAQREWPVELVVCADATLLTNRAAMLGLPLTLRPYSPNSPAQPQTAGTLTLLPVALRAPVTAGQLAVENGHYVVETLARACDGCLNGEFAALITGPVHKGVINDAGIPFTGHTEFFEERSQAKKVVMMLATEELRVALATTHLPLRDIADAITPALLHEVIAILHHDLRTKFGIAEPRILVCGLNPHAGEGGHMGTEEIDTIIPVLNELRAQGMKLNGPLPADTLFQPKYLDNADAVLAMYHDQGLPVLKYQGFGRGVNITLGLPFIRTSVDHGTALELAGRGKADVGSFITALNLAIKMIVNTQ</sequence>
<gene>
    <name evidence="1" type="primary">pdxA</name>
    <name type="ordered locus">BWG_0050</name>
</gene>